<reference key="1">
    <citation type="journal article" date="2014" name="Stand. Genomic Sci.">
        <title>Complete genome sequence of Anabaena variabilis ATCC 29413.</title>
        <authorList>
            <person name="Thiel T."/>
            <person name="Pratte B.S."/>
            <person name="Zhong J."/>
            <person name="Goodwin L."/>
            <person name="Copeland A."/>
            <person name="Lucas S."/>
            <person name="Han C."/>
            <person name="Pitluck S."/>
            <person name="Land M.L."/>
            <person name="Kyrpides N.C."/>
            <person name="Woyke T."/>
        </authorList>
    </citation>
    <scope>NUCLEOTIDE SEQUENCE [LARGE SCALE GENOMIC DNA]</scope>
    <source>
        <strain>ATCC 29413 / PCC 7937</strain>
    </source>
</reference>
<dbReference type="EC" id="2.6.99.2" evidence="1"/>
<dbReference type="EMBL" id="CP000117">
    <property type="protein sequence ID" value="ABA22322.1"/>
    <property type="status" value="ALT_INIT"/>
    <property type="molecule type" value="Genomic_DNA"/>
</dbReference>
<dbReference type="SMR" id="Q3M9L4"/>
<dbReference type="STRING" id="240292.Ava_2709"/>
<dbReference type="KEGG" id="ava:Ava_2709"/>
<dbReference type="eggNOG" id="COG0854">
    <property type="taxonomic scope" value="Bacteria"/>
</dbReference>
<dbReference type="HOGENOM" id="CLU_074563_0_0_3"/>
<dbReference type="UniPathway" id="UPA00244">
    <property type="reaction ID" value="UER00313"/>
</dbReference>
<dbReference type="Proteomes" id="UP000002533">
    <property type="component" value="Chromosome"/>
</dbReference>
<dbReference type="GO" id="GO:0005829">
    <property type="term" value="C:cytosol"/>
    <property type="evidence" value="ECO:0007669"/>
    <property type="project" value="TreeGrafter"/>
</dbReference>
<dbReference type="GO" id="GO:0033856">
    <property type="term" value="F:pyridoxine 5'-phosphate synthase activity"/>
    <property type="evidence" value="ECO:0007669"/>
    <property type="project" value="UniProtKB-EC"/>
</dbReference>
<dbReference type="GO" id="GO:0008615">
    <property type="term" value="P:pyridoxine biosynthetic process"/>
    <property type="evidence" value="ECO:0007669"/>
    <property type="project" value="UniProtKB-UniRule"/>
</dbReference>
<dbReference type="CDD" id="cd00003">
    <property type="entry name" value="PNPsynthase"/>
    <property type="match status" value="1"/>
</dbReference>
<dbReference type="Gene3D" id="3.20.20.70">
    <property type="entry name" value="Aldolase class I"/>
    <property type="match status" value="1"/>
</dbReference>
<dbReference type="HAMAP" id="MF_00279">
    <property type="entry name" value="PdxJ"/>
    <property type="match status" value="1"/>
</dbReference>
<dbReference type="InterPro" id="IPR013785">
    <property type="entry name" value="Aldolase_TIM"/>
</dbReference>
<dbReference type="InterPro" id="IPR004569">
    <property type="entry name" value="PyrdxlP_synth_PdxJ"/>
</dbReference>
<dbReference type="InterPro" id="IPR036130">
    <property type="entry name" value="Pyridoxine-5'_phos_synth"/>
</dbReference>
<dbReference type="NCBIfam" id="TIGR00559">
    <property type="entry name" value="pdxJ"/>
    <property type="match status" value="1"/>
</dbReference>
<dbReference type="NCBIfam" id="NF003623">
    <property type="entry name" value="PRK05265.1-1"/>
    <property type="match status" value="1"/>
</dbReference>
<dbReference type="NCBIfam" id="NF003625">
    <property type="entry name" value="PRK05265.1-3"/>
    <property type="match status" value="1"/>
</dbReference>
<dbReference type="NCBIfam" id="NF003627">
    <property type="entry name" value="PRK05265.1-5"/>
    <property type="match status" value="1"/>
</dbReference>
<dbReference type="PANTHER" id="PTHR30456">
    <property type="entry name" value="PYRIDOXINE 5'-PHOSPHATE SYNTHASE"/>
    <property type="match status" value="1"/>
</dbReference>
<dbReference type="PANTHER" id="PTHR30456:SF0">
    <property type="entry name" value="PYRIDOXINE 5'-PHOSPHATE SYNTHASE"/>
    <property type="match status" value="1"/>
</dbReference>
<dbReference type="Pfam" id="PF03740">
    <property type="entry name" value="PdxJ"/>
    <property type="match status" value="1"/>
</dbReference>
<dbReference type="SUPFAM" id="SSF63892">
    <property type="entry name" value="Pyridoxine 5'-phosphate synthase"/>
    <property type="match status" value="1"/>
</dbReference>
<protein>
    <recommendedName>
        <fullName evidence="1">Pyridoxine 5'-phosphate synthase</fullName>
        <shortName evidence="1">PNP synthase</shortName>
        <ecNumber evidence="1">2.6.99.2</ecNumber>
    </recommendedName>
</protein>
<organism>
    <name type="scientific">Trichormus variabilis (strain ATCC 29413 / PCC 7937)</name>
    <name type="common">Anabaena variabilis</name>
    <dbReference type="NCBI Taxonomy" id="240292"/>
    <lineage>
        <taxon>Bacteria</taxon>
        <taxon>Bacillati</taxon>
        <taxon>Cyanobacteriota</taxon>
        <taxon>Cyanophyceae</taxon>
        <taxon>Nostocales</taxon>
        <taxon>Nostocaceae</taxon>
        <taxon>Trichormus</taxon>
    </lineage>
</organism>
<evidence type="ECO:0000255" key="1">
    <source>
        <dbReference type="HAMAP-Rule" id="MF_00279"/>
    </source>
</evidence>
<evidence type="ECO:0000305" key="2"/>
<comment type="function">
    <text evidence="1">Catalyzes the complicated ring closure reaction between the two acyclic compounds 1-deoxy-D-xylulose-5-phosphate (DXP) and 3-amino-2-oxopropyl phosphate (1-amino-acetone-3-phosphate or AAP) to form pyridoxine 5'-phosphate (PNP) and inorganic phosphate.</text>
</comment>
<comment type="catalytic activity">
    <reaction evidence="1">
        <text>3-amino-2-oxopropyl phosphate + 1-deoxy-D-xylulose 5-phosphate = pyridoxine 5'-phosphate + phosphate + 2 H2O + H(+)</text>
        <dbReference type="Rhea" id="RHEA:15265"/>
        <dbReference type="ChEBI" id="CHEBI:15377"/>
        <dbReference type="ChEBI" id="CHEBI:15378"/>
        <dbReference type="ChEBI" id="CHEBI:43474"/>
        <dbReference type="ChEBI" id="CHEBI:57279"/>
        <dbReference type="ChEBI" id="CHEBI:57792"/>
        <dbReference type="ChEBI" id="CHEBI:58589"/>
        <dbReference type="EC" id="2.6.99.2"/>
    </reaction>
</comment>
<comment type="pathway">
    <text evidence="1">Cofactor biosynthesis; pyridoxine 5'-phosphate biosynthesis; pyridoxine 5'-phosphate from D-erythrose 4-phosphate: step 5/5.</text>
</comment>
<comment type="subunit">
    <text evidence="1">Homooctamer; tetramer of dimers.</text>
</comment>
<comment type="subcellular location">
    <subcellularLocation>
        <location evidence="1">Cytoplasm</location>
    </subcellularLocation>
</comment>
<comment type="similarity">
    <text evidence="1">Belongs to the PNP synthase family.</text>
</comment>
<comment type="sequence caution" evidence="2">
    <conflict type="erroneous initiation">
        <sequence resource="EMBL-CDS" id="ABA22322"/>
    </conflict>
</comment>
<accession>Q3M9L4</accession>
<proteinExistence type="inferred from homology"/>
<feature type="chain" id="PRO_0000231778" description="Pyridoxine 5'-phosphate synthase">
    <location>
        <begin position="1"/>
        <end position="239"/>
    </location>
</feature>
<feature type="active site" description="Proton acceptor" evidence="1">
    <location>
        <position position="43"/>
    </location>
</feature>
<feature type="active site" description="Proton acceptor" evidence="1">
    <location>
        <position position="70"/>
    </location>
</feature>
<feature type="active site" description="Proton donor" evidence="1">
    <location>
        <position position="191"/>
    </location>
</feature>
<feature type="binding site" evidence="1">
    <location>
        <position position="7"/>
    </location>
    <ligand>
        <name>3-amino-2-oxopropyl phosphate</name>
        <dbReference type="ChEBI" id="CHEBI:57279"/>
    </ligand>
</feature>
<feature type="binding site" evidence="1">
    <location>
        <begin position="9"/>
        <end position="10"/>
    </location>
    <ligand>
        <name>1-deoxy-D-xylulose 5-phosphate</name>
        <dbReference type="ChEBI" id="CHEBI:57792"/>
    </ligand>
</feature>
<feature type="binding site" evidence="1">
    <location>
        <position position="18"/>
    </location>
    <ligand>
        <name>3-amino-2-oxopropyl phosphate</name>
        <dbReference type="ChEBI" id="CHEBI:57279"/>
    </ligand>
</feature>
<feature type="binding site" evidence="1">
    <location>
        <position position="45"/>
    </location>
    <ligand>
        <name>1-deoxy-D-xylulose 5-phosphate</name>
        <dbReference type="ChEBI" id="CHEBI:57792"/>
    </ligand>
</feature>
<feature type="binding site" evidence="1">
    <location>
        <position position="50"/>
    </location>
    <ligand>
        <name>1-deoxy-D-xylulose 5-phosphate</name>
        <dbReference type="ChEBI" id="CHEBI:57792"/>
    </ligand>
</feature>
<feature type="binding site" evidence="1">
    <location>
        <position position="100"/>
    </location>
    <ligand>
        <name>1-deoxy-D-xylulose 5-phosphate</name>
        <dbReference type="ChEBI" id="CHEBI:57792"/>
    </ligand>
</feature>
<feature type="binding site" evidence="1">
    <location>
        <position position="192"/>
    </location>
    <ligand>
        <name>3-amino-2-oxopropyl phosphate</name>
        <dbReference type="ChEBI" id="CHEBI:57279"/>
    </ligand>
</feature>
<feature type="binding site" evidence="1">
    <location>
        <begin position="213"/>
        <end position="214"/>
    </location>
    <ligand>
        <name>3-amino-2-oxopropyl phosphate</name>
        <dbReference type="ChEBI" id="CHEBI:57279"/>
    </ligand>
</feature>
<feature type="site" description="Transition state stabilizer" evidence="1">
    <location>
        <position position="151"/>
    </location>
</feature>
<sequence>MATLGVNIDHIATIRQARRTVEPDPVAAAVLAELGGADGITVHLREDRRHIQDRDVQLLRQTVRTHLNLEMAATDEMVGIALDIKPDYVTLVPEKREEVTTEGGLDIVGQIARIGEVVSKLQNAAIPVSLFIDAEPAQIEASVKVQAKFIELHTGRYAEATDETSRQQELAFLATGCEQAIKAGLRVNAGHGLTYWNVYPVAALPGMEELNIGHTIISRAALVGIERAVREMKQAIRGE</sequence>
<gene>
    <name evidence="1" type="primary">pdxJ</name>
    <name type="ordered locus">Ava_2709</name>
</gene>
<name>PDXJ_TRIV2</name>
<keyword id="KW-0963">Cytoplasm</keyword>
<keyword id="KW-0664">Pyridoxine biosynthesis</keyword>
<keyword id="KW-0808">Transferase</keyword>